<reference key="1">
    <citation type="journal article" date="2005" name="Infect. Immun.">
        <title>Whole-genome analyses of speciation events in pathogenic Brucellae.</title>
        <authorList>
            <person name="Chain P.S."/>
            <person name="Comerci D.J."/>
            <person name="Tolmasky M.E."/>
            <person name="Larimer F.W."/>
            <person name="Malfatti S.A."/>
            <person name="Vergez L.M."/>
            <person name="Aguero F."/>
            <person name="Land M.L."/>
            <person name="Ugalde R.A."/>
            <person name="Garcia E."/>
        </authorList>
    </citation>
    <scope>NUCLEOTIDE SEQUENCE [LARGE SCALE GENOMIC DNA]</scope>
    <source>
        <strain>2308</strain>
    </source>
</reference>
<accession>Q2YKR5</accession>
<name>UGPB_BRUA2</name>
<feature type="signal peptide" evidence="2">
    <location>
        <begin position="1"/>
        <end position="25"/>
    </location>
</feature>
<feature type="chain" id="PRO_0000290126" description="sn-glycerol-3-phosphate-binding periplasmic protein UgpB">
    <location>
        <begin position="26"/>
        <end position="433"/>
    </location>
</feature>
<feature type="binding site" evidence="1">
    <location>
        <position position="67"/>
    </location>
    <ligand>
        <name>sn-glycerol 3-phosphate</name>
        <dbReference type="ChEBI" id="CHEBI:57597"/>
    </ligand>
</feature>
<feature type="binding site" evidence="1">
    <location>
        <position position="91"/>
    </location>
    <ligand>
        <name>sn-glycerol 3-phosphate</name>
        <dbReference type="ChEBI" id="CHEBI:57597"/>
    </ligand>
</feature>
<feature type="binding site" evidence="1">
    <location>
        <position position="146"/>
    </location>
    <ligand>
        <name>sn-glycerol 3-phosphate</name>
        <dbReference type="ChEBI" id="CHEBI:57597"/>
    </ligand>
</feature>
<feature type="binding site" evidence="1">
    <location>
        <position position="273"/>
    </location>
    <ligand>
        <name>sn-glycerol 3-phosphate</name>
        <dbReference type="ChEBI" id="CHEBI:57597"/>
    </ligand>
</feature>
<feature type="binding site" evidence="1">
    <location>
        <position position="307"/>
    </location>
    <ligand>
        <name>sn-glycerol 3-phosphate</name>
        <dbReference type="ChEBI" id="CHEBI:57597"/>
    </ligand>
</feature>
<feature type="binding site" evidence="1">
    <location>
        <position position="346"/>
    </location>
    <ligand>
        <name>sn-glycerol 3-phosphate</name>
        <dbReference type="ChEBI" id="CHEBI:57597"/>
    </ligand>
</feature>
<feature type="binding site" evidence="1">
    <location>
        <position position="397"/>
    </location>
    <ligand>
        <name>sn-glycerol 3-phosphate</name>
        <dbReference type="ChEBI" id="CHEBI:57597"/>
    </ligand>
</feature>
<keyword id="KW-0574">Periplasm</keyword>
<keyword id="KW-1185">Reference proteome</keyword>
<keyword id="KW-0732">Signal</keyword>
<keyword id="KW-0813">Transport</keyword>
<sequence>MFTRLITTSVLTGAIALTIGSQAFAQTELAWWHGMTGANNEMVNELSKEFNESQSEYKIVPVYKGNYPETLNAGIAAFRSKQPPAILQVFDAGSGVMMAAEGAIVPAAEVLEKGGYKFDKSQYLPGIVAYYSKPDGTMLSFPYNSSSPILYYNKDAFKKAGLDENKPPKTWPEVFEAAKKIKASGASPCGFTSTWLTWIQTENFAAWNNVPYGTNENGLAGTDVKLEINSPLYVEHFQAIADLAKDGTFRYGGRTSEAKQLFTSGECAMLTESSGGLGDVVKSGINYGIGQLPYYEGHGPQNTIPGGASLWVFAGLSDDQYKGIAEFFNFLSQTKIQVKLHEKSGYLPVTLAAYEETKKSDFYEKNPGRETPILQMMGKEPTENSKGVRLVNLPQVRDILNEEFEAMLGGKQDAKTALDNAVKRGNAAIAAAQ</sequence>
<evidence type="ECO:0000250" key="1">
    <source>
        <dbReference type="UniProtKB" id="P0AG80"/>
    </source>
</evidence>
<evidence type="ECO:0000255" key="2"/>
<evidence type="ECO:0000305" key="3"/>
<dbReference type="EMBL" id="AM040265">
    <property type="protein sequence ID" value="CAJ12751.1"/>
    <property type="molecule type" value="Genomic_DNA"/>
</dbReference>
<dbReference type="RefSeq" id="WP_002965982.1">
    <property type="nucleotide sequence ID" value="NZ_KN046823.1"/>
</dbReference>
<dbReference type="SMR" id="Q2YKR5"/>
<dbReference type="STRING" id="359391.BAB2_0585"/>
<dbReference type="GeneID" id="93015520"/>
<dbReference type="KEGG" id="bmf:BAB2_0585"/>
<dbReference type="PATRIC" id="fig|359391.11.peg.2770"/>
<dbReference type="HOGENOM" id="CLU_031285_3_0_5"/>
<dbReference type="PhylomeDB" id="Q2YKR5"/>
<dbReference type="PRO" id="PR:Q2YKR5"/>
<dbReference type="Proteomes" id="UP000002719">
    <property type="component" value="Chromosome II"/>
</dbReference>
<dbReference type="GO" id="GO:0042597">
    <property type="term" value="C:periplasmic space"/>
    <property type="evidence" value="ECO:0007669"/>
    <property type="project" value="UniProtKB-SubCell"/>
</dbReference>
<dbReference type="CDD" id="cd14748">
    <property type="entry name" value="PBP2_UgpB"/>
    <property type="match status" value="1"/>
</dbReference>
<dbReference type="Gene3D" id="3.40.190.10">
    <property type="entry name" value="Periplasmic binding protein-like II"/>
    <property type="match status" value="2"/>
</dbReference>
<dbReference type="InterPro" id="IPR050490">
    <property type="entry name" value="Bact_solute-bd_prot1"/>
</dbReference>
<dbReference type="InterPro" id="IPR006059">
    <property type="entry name" value="SBP"/>
</dbReference>
<dbReference type="NCBIfam" id="NF008211">
    <property type="entry name" value="PRK10974.1"/>
    <property type="match status" value="1"/>
</dbReference>
<dbReference type="PANTHER" id="PTHR43649">
    <property type="entry name" value="ARABINOSE-BINDING PROTEIN-RELATED"/>
    <property type="match status" value="1"/>
</dbReference>
<dbReference type="PANTHER" id="PTHR43649:SF31">
    <property type="entry name" value="SN-GLYCEROL-3-PHOSPHATE-BINDING PERIPLASMIC PROTEIN UGPB"/>
    <property type="match status" value="1"/>
</dbReference>
<dbReference type="Pfam" id="PF13416">
    <property type="entry name" value="SBP_bac_8"/>
    <property type="match status" value="1"/>
</dbReference>
<dbReference type="SUPFAM" id="SSF53850">
    <property type="entry name" value="Periplasmic binding protein-like II"/>
    <property type="match status" value="1"/>
</dbReference>
<proteinExistence type="inferred from homology"/>
<organism>
    <name type="scientific">Brucella abortus (strain 2308)</name>
    <dbReference type="NCBI Taxonomy" id="359391"/>
    <lineage>
        <taxon>Bacteria</taxon>
        <taxon>Pseudomonadati</taxon>
        <taxon>Pseudomonadota</taxon>
        <taxon>Alphaproteobacteria</taxon>
        <taxon>Hyphomicrobiales</taxon>
        <taxon>Brucellaceae</taxon>
        <taxon>Brucella/Ochrobactrum group</taxon>
        <taxon>Brucella</taxon>
    </lineage>
</organism>
<comment type="function">
    <text evidence="1">Part of the ABC transporter complex UgpBAEC involved in sn-glycerol-3-phosphate (G3P) import. Binds G3P.</text>
</comment>
<comment type="subunit">
    <text evidence="1">The complex is composed of two ATP-binding proteins (UgpC), two transmembrane proteins (UgpA and UgpE) and a solute-binding protein (UgpB).</text>
</comment>
<comment type="subcellular location">
    <subcellularLocation>
        <location evidence="1">Periplasm</location>
    </subcellularLocation>
</comment>
<comment type="similarity">
    <text evidence="3">Belongs to the bacterial solute-binding protein 1 family.</text>
</comment>
<gene>
    <name type="primary">ugpB</name>
    <name type="ordered locus">BAB2_0585</name>
</gene>
<protein>
    <recommendedName>
        <fullName evidence="1">sn-glycerol-3-phosphate-binding periplasmic protein UgpB</fullName>
    </recommendedName>
</protein>